<name>HIS7_PSEA8</name>
<reference key="1">
    <citation type="journal article" date="2009" name="Genome Res.">
        <title>Newly introduced genomic prophage islands are critical determinants of in vivo competitiveness in the Liverpool epidemic strain of Pseudomonas aeruginosa.</title>
        <authorList>
            <person name="Winstanley C."/>
            <person name="Langille M.G.I."/>
            <person name="Fothergill J.L."/>
            <person name="Kukavica-Ibrulj I."/>
            <person name="Paradis-Bleau C."/>
            <person name="Sanschagrin F."/>
            <person name="Thomson N.R."/>
            <person name="Winsor G.L."/>
            <person name="Quail M.A."/>
            <person name="Lennard N."/>
            <person name="Bignell A."/>
            <person name="Clarke L."/>
            <person name="Seeger K."/>
            <person name="Saunders D."/>
            <person name="Harris D."/>
            <person name="Parkhill J."/>
            <person name="Hancock R.E.W."/>
            <person name="Brinkman F.S.L."/>
            <person name="Levesque R.C."/>
        </authorList>
    </citation>
    <scope>NUCLEOTIDE SEQUENCE [LARGE SCALE GENOMIC DNA]</scope>
    <source>
        <strain>LESB58</strain>
    </source>
</reference>
<feature type="chain" id="PRO_1000117084" description="Imidazoleglycerol-phosphate dehydratase">
    <location>
        <begin position="1"/>
        <end position="197"/>
    </location>
</feature>
<keyword id="KW-0028">Amino-acid biosynthesis</keyword>
<keyword id="KW-0963">Cytoplasm</keyword>
<keyword id="KW-0368">Histidine biosynthesis</keyword>
<keyword id="KW-0456">Lyase</keyword>
<proteinExistence type="inferred from homology"/>
<evidence type="ECO:0000255" key="1">
    <source>
        <dbReference type="HAMAP-Rule" id="MF_00076"/>
    </source>
</evidence>
<protein>
    <recommendedName>
        <fullName evidence="1">Imidazoleglycerol-phosphate dehydratase</fullName>
        <shortName evidence="1">IGPD</shortName>
        <ecNumber evidence="1">4.2.1.19</ecNumber>
    </recommendedName>
</protein>
<sequence>MAERKASVARDTLETQIKVSIDLDGTGKARFDTGVPFLDHMMDQIARHGLIDLDIECKGDLHIDDHHTVEDIGITLGQAFAKAIGDKKGIRRYGHAYVPLDEALSRVVIDFSGRPGLQMHVPFTRASVGGFDVDLFMEFFQGFVNHAQVTLHIDNLRGHNTHHQIETVFKAFGRALRMAIELDERMAGQMPSTKGCL</sequence>
<organism>
    <name type="scientific">Pseudomonas aeruginosa (strain LESB58)</name>
    <dbReference type="NCBI Taxonomy" id="557722"/>
    <lineage>
        <taxon>Bacteria</taxon>
        <taxon>Pseudomonadati</taxon>
        <taxon>Pseudomonadota</taxon>
        <taxon>Gammaproteobacteria</taxon>
        <taxon>Pseudomonadales</taxon>
        <taxon>Pseudomonadaceae</taxon>
        <taxon>Pseudomonas</taxon>
    </lineage>
</organism>
<accession>B7V3N7</accession>
<dbReference type="EC" id="4.2.1.19" evidence="1"/>
<dbReference type="EMBL" id="FM209186">
    <property type="protein sequence ID" value="CAW30288.1"/>
    <property type="molecule type" value="Genomic_DNA"/>
</dbReference>
<dbReference type="RefSeq" id="WP_003096088.1">
    <property type="nucleotide sequence ID" value="NC_011770.1"/>
</dbReference>
<dbReference type="SMR" id="B7V3N7"/>
<dbReference type="GeneID" id="77223672"/>
<dbReference type="KEGG" id="pag:PLES_55341"/>
<dbReference type="HOGENOM" id="CLU_044308_3_0_6"/>
<dbReference type="UniPathway" id="UPA00031">
    <property type="reaction ID" value="UER00011"/>
</dbReference>
<dbReference type="GO" id="GO:0005737">
    <property type="term" value="C:cytoplasm"/>
    <property type="evidence" value="ECO:0007669"/>
    <property type="project" value="UniProtKB-SubCell"/>
</dbReference>
<dbReference type="GO" id="GO:0004424">
    <property type="term" value="F:imidazoleglycerol-phosphate dehydratase activity"/>
    <property type="evidence" value="ECO:0007669"/>
    <property type="project" value="UniProtKB-UniRule"/>
</dbReference>
<dbReference type="GO" id="GO:0000105">
    <property type="term" value="P:L-histidine biosynthetic process"/>
    <property type="evidence" value="ECO:0007669"/>
    <property type="project" value="UniProtKB-UniRule"/>
</dbReference>
<dbReference type="CDD" id="cd07914">
    <property type="entry name" value="IGPD"/>
    <property type="match status" value="1"/>
</dbReference>
<dbReference type="FunFam" id="3.30.230.40:FF:000002">
    <property type="entry name" value="Imidazoleglycerol-phosphate dehydratase"/>
    <property type="match status" value="1"/>
</dbReference>
<dbReference type="FunFam" id="3.30.230.40:FF:000003">
    <property type="entry name" value="Imidazoleglycerol-phosphate dehydratase HisB"/>
    <property type="match status" value="1"/>
</dbReference>
<dbReference type="Gene3D" id="3.30.230.40">
    <property type="entry name" value="Imidazole glycerol phosphate dehydratase, domain 1"/>
    <property type="match status" value="2"/>
</dbReference>
<dbReference type="HAMAP" id="MF_00076">
    <property type="entry name" value="HisB"/>
    <property type="match status" value="1"/>
</dbReference>
<dbReference type="InterPro" id="IPR038494">
    <property type="entry name" value="IGPD_sf"/>
</dbReference>
<dbReference type="InterPro" id="IPR000807">
    <property type="entry name" value="ImidazoleglycerolP_deHydtase"/>
</dbReference>
<dbReference type="InterPro" id="IPR020565">
    <property type="entry name" value="ImidazoleglycerP_deHydtase_CS"/>
</dbReference>
<dbReference type="InterPro" id="IPR020568">
    <property type="entry name" value="Ribosomal_Su5_D2-typ_SF"/>
</dbReference>
<dbReference type="NCBIfam" id="NF002106">
    <property type="entry name" value="PRK00951.1-1"/>
    <property type="match status" value="1"/>
</dbReference>
<dbReference type="NCBIfam" id="NF002109">
    <property type="entry name" value="PRK00951.1-5"/>
    <property type="match status" value="1"/>
</dbReference>
<dbReference type="NCBIfam" id="NF002111">
    <property type="entry name" value="PRK00951.2-1"/>
    <property type="match status" value="1"/>
</dbReference>
<dbReference type="NCBIfam" id="NF002114">
    <property type="entry name" value="PRK00951.2-4"/>
    <property type="match status" value="1"/>
</dbReference>
<dbReference type="PANTHER" id="PTHR23133:SF2">
    <property type="entry name" value="IMIDAZOLEGLYCEROL-PHOSPHATE DEHYDRATASE"/>
    <property type="match status" value="1"/>
</dbReference>
<dbReference type="PANTHER" id="PTHR23133">
    <property type="entry name" value="IMIDAZOLEGLYCEROL-PHOSPHATE DEHYDRATASE HIS7"/>
    <property type="match status" value="1"/>
</dbReference>
<dbReference type="Pfam" id="PF00475">
    <property type="entry name" value="IGPD"/>
    <property type="match status" value="1"/>
</dbReference>
<dbReference type="SUPFAM" id="SSF54211">
    <property type="entry name" value="Ribosomal protein S5 domain 2-like"/>
    <property type="match status" value="2"/>
</dbReference>
<dbReference type="PROSITE" id="PS00954">
    <property type="entry name" value="IGP_DEHYDRATASE_1"/>
    <property type="match status" value="1"/>
</dbReference>
<dbReference type="PROSITE" id="PS00955">
    <property type="entry name" value="IGP_DEHYDRATASE_2"/>
    <property type="match status" value="1"/>
</dbReference>
<gene>
    <name evidence="1" type="primary">hisB</name>
    <name type="ordered locus">PLES_55341</name>
</gene>
<comment type="catalytic activity">
    <reaction evidence="1">
        <text>D-erythro-1-(imidazol-4-yl)glycerol 3-phosphate = 3-(imidazol-4-yl)-2-oxopropyl phosphate + H2O</text>
        <dbReference type="Rhea" id="RHEA:11040"/>
        <dbReference type="ChEBI" id="CHEBI:15377"/>
        <dbReference type="ChEBI" id="CHEBI:57766"/>
        <dbReference type="ChEBI" id="CHEBI:58278"/>
        <dbReference type="EC" id="4.2.1.19"/>
    </reaction>
</comment>
<comment type="pathway">
    <text evidence="1">Amino-acid biosynthesis; L-histidine biosynthesis; L-histidine from 5-phospho-alpha-D-ribose 1-diphosphate: step 6/9.</text>
</comment>
<comment type="subcellular location">
    <subcellularLocation>
        <location evidence="1">Cytoplasm</location>
    </subcellularLocation>
</comment>
<comment type="similarity">
    <text evidence="1">Belongs to the imidazoleglycerol-phosphate dehydratase family.</text>
</comment>